<keyword id="KW-0067">ATP-binding</keyword>
<keyword id="KW-0963">Cytoplasm</keyword>
<keyword id="KW-0324">Glycolysis</keyword>
<keyword id="KW-0418">Kinase</keyword>
<keyword id="KW-0547">Nucleotide-binding</keyword>
<keyword id="KW-1185">Reference proteome</keyword>
<keyword id="KW-0808">Transferase</keyword>
<comment type="catalytic activity">
    <reaction evidence="1">
        <text>(2R)-3-phosphoglycerate + ATP = (2R)-3-phospho-glyceroyl phosphate + ADP</text>
        <dbReference type="Rhea" id="RHEA:14801"/>
        <dbReference type="ChEBI" id="CHEBI:30616"/>
        <dbReference type="ChEBI" id="CHEBI:57604"/>
        <dbReference type="ChEBI" id="CHEBI:58272"/>
        <dbReference type="ChEBI" id="CHEBI:456216"/>
        <dbReference type="EC" id="2.7.2.3"/>
    </reaction>
</comment>
<comment type="pathway">
    <text evidence="1">Carbohydrate degradation; glycolysis; pyruvate from D-glyceraldehyde 3-phosphate: step 2/5.</text>
</comment>
<comment type="subunit">
    <text evidence="1">Monomer.</text>
</comment>
<comment type="subcellular location">
    <subcellularLocation>
        <location evidence="1">Cytoplasm</location>
    </subcellularLocation>
</comment>
<comment type="similarity">
    <text evidence="1">Belongs to the phosphoglycerate kinase family.</text>
</comment>
<gene>
    <name evidence="1" type="primary">pgk</name>
    <name type="ordered locus">ESA_00409</name>
</gene>
<organism>
    <name type="scientific">Cronobacter sakazakii (strain ATCC BAA-894)</name>
    <name type="common">Enterobacter sakazakii</name>
    <dbReference type="NCBI Taxonomy" id="290339"/>
    <lineage>
        <taxon>Bacteria</taxon>
        <taxon>Pseudomonadati</taxon>
        <taxon>Pseudomonadota</taxon>
        <taxon>Gammaproteobacteria</taxon>
        <taxon>Enterobacterales</taxon>
        <taxon>Enterobacteriaceae</taxon>
        <taxon>Cronobacter</taxon>
    </lineage>
</organism>
<sequence length="387" mass="41278">MSVIKMTDLDLAGKRVLIRADLNVPVKEGKVTSDARIRASLPTIELALKQGAKVMVTSHLGRPTEGEYNEEFSLLPVVNYLKDKLNSPVRLAKDYLDGVEVAEGELVVLENVRFNKGEKKDDETLAKKYASLCDVFVMDAFGTAHRAQASTHGVAKFADVACAGPLLAEELDALGKALKEPARPMVAIVGGSKVSTKLTVLDSLSKIADQLIVGGGIANTFVAAQGHNVGKSLYEADLVDEAKRLLGTCDIPVPTDVRVATEFSETAPATLKSVTEIKDEEQILDMGDVSAEKLAEILKNAKTILWNGPVGVFEFPNFRKGTEIVARAIAESDAFSIAGGGDTLAAIDMFGIADKISYISTGGGAFLEFVEGKVLPAVAMLEERAKK</sequence>
<feature type="chain" id="PRO_1000057987" description="Phosphoglycerate kinase">
    <location>
        <begin position="1"/>
        <end position="387"/>
    </location>
</feature>
<feature type="binding site" evidence="1">
    <location>
        <begin position="21"/>
        <end position="23"/>
    </location>
    <ligand>
        <name>substrate</name>
    </ligand>
</feature>
<feature type="binding site" evidence="1">
    <location>
        <position position="36"/>
    </location>
    <ligand>
        <name>substrate</name>
    </ligand>
</feature>
<feature type="binding site" evidence="1">
    <location>
        <begin position="59"/>
        <end position="62"/>
    </location>
    <ligand>
        <name>substrate</name>
    </ligand>
</feature>
<feature type="binding site" evidence="1">
    <location>
        <position position="113"/>
    </location>
    <ligand>
        <name>substrate</name>
    </ligand>
</feature>
<feature type="binding site" evidence="1">
    <location>
        <position position="146"/>
    </location>
    <ligand>
        <name>substrate</name>
    </ligand>
</feature>
<feature type="binding site" evidence="1">
    <location>
        <position position="197"/>
    </location>
    <ligand>
        <name>ATP</name>
        <dbReference type="ChEBI" id="CHEBI:30616"/>
    </ligand>
</feature>
<feature type="binding site" evidence="1">
    <location>
        <position position="314"/>
    </location>
    <ligand>
        <name>ATP</name>
        <dbReference type="ChEBI" id="CHEBI:30616"/>
    </ligand>
</feature>
<feature type="binding site" evidence="1">
    <location>
        <begin position="340"/>
        <end position="343"/>
    </location>
    <ligand>
        <name>ATP</name>
        <dbReference type="ChEBI" id="CHEBI:30616"/>
    </ligand>
</feature>
<name>PGK_CROS8</name>
<evidence type="ECO:0000255" key="1">
    <source>
        <dbReference type="HAMAP-Rule" id="MF_00145"/>
    </source>
</evidence>
<accession>A7MJQ4</accession>
<proteinExistence type="inferred from homology"/>
<protein>
    <recommendedName>
        <fullName evidence="1">Phosphoglycerate kinase</fullName>
        <ecNumber evidence="1">2.7.2.3</ecNumber>
    </recommendedName>
</protein>
<reference key="1">
    <citation type="journal article" date="2010" name="PLoS ONE">
        <title>Genome sequence of Cronobacter sakazakii BAA-894 and comparative genomic hybridization analysis with other Cronobacter species.</title>
        <authorList>
            <person name="Kucerova E."/>
            <person name="Clifton S.W."/>
            <person name="Xia X.Q."/>
            <person name="Long F."/>
            <person name="Porwollik S."/>
            <person name="Fulton L."/>
            <person name="Fronick C."/>
            <person name="Minx P."/>
            <person name="Kyung K."/>
            <person name="Warren W."/>
            <person name="Fulton R."/>
            <person name="Feng D."/>
            <person name="Wollam A."/>
            <person name="Shah N."/>
            <person name="Bhonagiri V."/>
            <person name="Nash W.E."/>
            <person name="Hallsworth-Pepin K."/>
            <person name="Wilson R.K."/>
            <person name="McClelland M."/>
            <person name="Forsythe S.J."/>
        </authorList>
    </citation>
    <scope>NUCLEOTIDE SEQUENCE [LARGE SCALE GENOMIC DNA]</scope>
    <source>
        <strain>ATCC BAA-894</strain>
    </source>
</reference>
<dbReference type="EC" id="2.7.2.3" evidence="1"/>
<dbReference type="EMBL" id="CP000783">
    <property type="protein sequence ID" value="ABU75707.1"/>
    <property type="molecule type" value="Genomic_DNA"/>
</dbReference>
<dbReference type="RefSeq" id="WP_004385648.1">
    <property type="nucleotide sequence ID" value="NC_009778.1"/>
</dbReference>
<dbReference type="SMR" id="A7MJQ4"/>
<dbReference type="GeneID" id="56733366"/>
<dbReference type="KEGG" id="esa:ESA_00409"/>
<dbReference type="HOGENOM" id="CLU_025427_0_2_6"/>
<dbReference type="UniPathway" id="UPA00109">
    <property type="reaction ID" value="UER00185"/>
</dbReference>
<dbReference type="Proteomes" id="UP000000260">
    <property type="component" value="Chromosome"/>
</dbReference>
<dbReference type="GO" id="GO:0005829">
    <property type="term" value="C:cytosol"/>
    <property type="evidence" value="ECO:0007669"/>
    <property type="project" value="TreeGrafter"/>
</dbReference>
<dbReference type="GO" id="GO:0043531">
    <property type="term" value="F:ADP binding"/>
    <property type="evidence" value="ECO:0007669"/>
    <property type="project" value="TreeGrafter"/>
</dbReference>
<dbReference type="GO" id="GO:0005524">
    <property type="term" value="F:ATP binding"/>
    <property type="evidence" value="ECO:0007669"/>
    <property type="project" value="UniProtKB-KW"/>
</dbReference>
<dbReference type="GO" id="GO:0004618">
    <property type="term" value="F:phosphoglycerate kinase activity"/>
    <property type="evidence" value="ECO:0007669"/>
    <property type="project" value="UniProtKB-UniRule"/>
</dbReference>
<dbReference type="GO" id="GO:0006094">
    <property type="term" value="P:gluconeogenesis"/>
    <property type="evidence" value="ECO:0007669"/>
    <property type="project" value="TreeGrafter"/>
</dbReference>
<dbReference type="GO" id="GO:0006096">
    <property type="term" value="P:glycolytic process"/>
    <property type="evidence" value="ECO:0007669"/>
    <property type="project" value="UniProtKB-UniRule"/>
</dbReference>
<dbReference type="FunFam" id="3.40.50.1260:FF:000001">
    <property type="entry name" value="Phosphoglycerate kinase"/>
    <property type="match status" value="1"/>
</dbReference>
<dbReference type="FunFam" id="3.40.50.1260:FF:000002">
    <property type="entry name" value="Phosphoglycerate kinase"/>
    <property type="match status" value="1"/>
</dbReference>
<dbReference type="Gene3D" id="3.40.50.1260">
    <property type="entry name" value="Phosphoglycerate kinase, N-terminal domain"/>
    <property type="match status" value="2"/>
</dbReference>
<dbReference type="HAMAP" id="MF_00145">
    <property type="entry name" value="Phosphoglyc_kinase"/>
    <property type="match status" value="1"/>
</dbReference>
<dbReference type="InterPro" id="IPR001576">
    <property type="entry name" value="Phosphoglycerate_kinase"/>
</dbReference>
<dbReference type="InterPro" id="IPR015911">
    <property type="entry name" value="Phosphoglycerate_kinase_CS"/>
</dbReference>
<dbReference type="InterPro" id="IPR015824">
    <property type="entry name" value="Phosphoglycerate_kinase_N"/>
</dbReference>
<dbReference type="InterPro" id="IPR036043">
    <property type="entry name" value="Phosphoglycerate_kinase_sf"/>
</dbReference>
<dbReference type="PANTHER" id="PTHR11406">
    <property type="entry name" value="PHOSPHOGLYCERATE KINASE"/>
    <property type="match status" value="1"/>
</dbReference>
<dbReference type="PANTHER" id="PTHR11406:SF23">
    <property type="entry name" value="PHOSPHOGLYCERATE KINASE 1, CHLOROPLASTIC-RELATED"/>
    <property type="match status" value="1"/>
</dbReference>
<dbReference type="Pfam" id="PF00162">
    <property type="entry name" value="PGK"/>
    <property type="match status" value="1"/>
</dbReference>
<dbReference type="PIRSF" id="PIRSF000724">
    <property type="entry name" value="Pgk"/>
    <property type="match status" value="1"/>
</dbReference>
<dbReference type="PRINTS" id="PR00477">
    <property type="entry name" value="PHGLYCKINASE"/>
</dbReference>
<dbReference type="SUPFAM" id="SSF53748">
    <property type="entry name" value="Phosphoglycerate kinase"/>
    <property type="match status" value="1"/>
</dbReference>
<dbReference type="PROSITE" id="PS00111">
    <property type="entry name" value="PGLYCERATE_KINASE"/>
    <property type="match status" value="1"/>
</dbReference>